<dbReference type="EC" id="2.1.1.233" evidence="2"/>
<dbReference type="EMBL" id="U89959">
    <property type="protein sequence ID" value="AAC24381.1"/>
    <property type="status" value="ALT_SEQ"/>
    <property type="molecule type" value="Genomic_DNA"/>
</dbReference>
<dbReference type="EMBL" id="CP002684">
    <property type="protein sequence ID" value="AEE27383.1"/>
    <property type="molecule type" value="Genomic_DNA"/>
</dbReference>
<dbReference type="EMBL" id="CP002684">
    <property type="protein sequence ID" value="AEE27384.1"/>
    <property type="molecule type" value="Genomic_DNA"/>
</dbReference>
<dbReference type="EMBL" id="AY074300">
    <property type="protein sequence ID" value="AAL66997.1"/>
    <property type="molecule type" value="mRNA"/>
</dbReference>
<dbReference type="EMBL" id="AY133744">
    <property type="protein sequence ID" value="AAM91678.1"/>
    <property type="molecule type" value="mRNA"/>
</dbReference>
<dbReference type="EMBL" id="AK220671">
    <property type="protein sequence ID" value="BAD95220.1"/>
    <property type="status" value="ALT_INIT"/>
    <property type="molecule type" value="mRNA"/>
</dbReference>
<dbReference type="PIR" id="H86152">
    <property type="entry name" value="H86152"/>
</dbReference>
<dbReference type="RefSeq" id="NP_171712.2">
    <property type="nucleotide sequence ID" value="NM_100090.4"/>
</dbReference>
<dbReference type="RefSeq" id="NP_973741.1">
    <property type="nucleotide sequence ID" value="NM_202012.1"/>
</dbReference>
<dbReference type="SMR" id="Q8VY08"/>
<dbReference type="FunCoup" id="Q8VY08">
    <property type="interactions" value="4440"/>
</dbReference>
<dbReference type="STRING" id="3702.Q8VY08"/>
<dbReference type="iPTMnet" id="Q8VY08"/>
<dbReference type="PaxDb" id="3702-AT1G02100.1"/>
<dbReference type="EnsemblPlants" id="AT1G02100.1">
    <property type="protein sequence ID" value="AT1G02100.1"/>
    <property type="gene ID" value="AT1G02100"/>
</dbReference>
<dbReference type="EnsemblPlants" id="AT1G02100.3">
    <property type="protein sequence ID" value="AT1G02100.3"/>
    <property type="gene ID" value="AT1G02100"/>
</dbReference>
<dbReference type="GeneID" id="837541"/>
<dbReference type="Gramene" id="AT1G02100.1">
    <property type="protein sequence ID" value="AT1G02100.1"/>
    <property type="gene ID" value="AT1G02100"/>
</dbReference>
<dbReference type="Gramene" id="AT1G02100.3">
    <property type="protein sequence ID" value="AT1G02100.3"/>
    <property type="gene ID" value="AT1G02100"/>
</dbReference>
<dbReference type="KEGG" id="ath:AT1G02100"/>
<dbReference type="Araport" id="AT1G02100"/>
<dbReference type="TAIR" id="AT1G02100">
    <property type="gene designation" value="SBI1"/>
</dbReference>
<dbReference type="eggNOG" id="KOG2918">
    <property type="taxonomic scope" value="Eukaryota"/>
</dbReference>
<dbReference type="HOGENOM" id="CLU_031312_0_0_1"/>
<dbReference type="InParanoid" id="Q8VY08"/>
<dbReference type="PhylomeDB" id="Q8VY08"/>
<dbReference type="BRENDA" id="2.1.1.233">
    <property type="organism ID" value="399"/>
</dbReference>
<dbReference type="PRO" id="PR:Q8VY08"/>
<dbReference type="Proteomes" id="UP000006548">
    <property type="component" value="Chromosome 1"/>
</dbReference>
<dbReference type="ExpressionAtlas" id="Q8VY08">
    <property type="expression patterns" value="baseline and differential"/>
</dbReference>
<dbReference type="GO" id="GO:0005737">
    <property type="term" value="C:cytoplasm"/>
    <property type="evidence" value="ECO:0000314"/>
    <property type="project" value="UniProtKB"/>
</dbReference>
<dbReference type="GO" id="GO:0016020">
    <property type="term" value="C:membrane"/>
    <property type="evidence" value="ECO:0007669"/>
    <property type="project" value="UniProtKB-SubCell"/>
</dbReference>
<dbReference type="GO" id="GO:0018423">
    <property type="term" value="F:protein C-terminal leucine carboxyl O-methyltransferase activity"/>
    <property type="evidence" value="ECO:0007669"/>
    <property type="project" value="UniProtKB-EC"/>
</dbReference>
<dbReference type="GO" id="GO:0008757">
    <property type="term" value="F:S-adenosylmethionine-dependent methyltransferase activity"/>
    <property type="evidence" value="ECO:0000314"/>
    <property type="project" value="UniProtKB"/>
</dbReference>
<dbReference type="GO" id="GO:0032259">
    <property type="term" value="P:methylation"/>
    <property type="evidence" value="ECO:0000314"/>
    <property type="project" value="UniProtKB"/>
</dbReference>
<dbReference type="GO" id="GO:1900458">
    <property type="term" value="P:negative regulation of brassinosteroid mediated signaling pathway"/>
    <property type="evidence" value="ECO:0000314"/>
    <property type="project" value="UniProtKB"/>
</dbReference>
<dbReference type="FunFam" id="3.40.50.150:FF:000092">
    <property type="entry name" value="Leucine carboxyl methyltransferase 1"/>
    <property type="match status" value="1"/>
</dbReference>
<dbReference type="Gene3D" id="3.40.50.150">
    <property type="entry name" value="Vaccinia Virus protein VP39"/>
    <property type="match status" value="1"/>
</dbReference>
<dbReference type="InterPro" id="IPR016651">
    <property type="entry name" value="LCMT1"/>
</dbReference>
<dbReference type="InterPro" id="IPR007213">
    <property type="entry name" value="Ppm1/Ppm2/Tcmp"/>
</dbReference>
<dbReference type="InterPro" id="IPR029063">
    <property type="entry name" value="SAM-dependent_MTases_sf"/>
</dbReference>
<dbReference type="PANTHER" id="PTHR13600">
    <property type="entry name" value="LEUCINE CARBOXYL METHYLTRANSFERASE"/>
    <property type="match status" value="1"/>
</dbReference>
<dbReference type="PANTHER" id="PTHR13600:SF21">
    <property type="entry name" value="LEUCINE CARBOXYL METHYLTRANSFERASE 1"/>
    <property type="match status" value="1"/>
</dbReference>
<dbReference type="Pfam" id="PF04072">
    <property type="entry name" value="LCM"/>
    <property type="match status" value="1"/>
</dbReference>
<dbReference type="PIRSF" id="PIRSF016305">
    <property type="entry name" value="LCM_mtfrase"/>
    <property type="match status" value="1"/>
</dbReference>
<dbReference type="SUPFAM" id="SSF53335">
    <property type="entry name" value="S-adenosyl-L-methionine-dependent methyltransferases"/>
    <property type="match status" value="1"/>
</dbReference>
<organism>
    <name type="scientific">Arabidopsis thaliana</name>
    <name type="common">Mouse-ear cress</name>
    <dbReference type="NCBI Taxonomy" id="3702"/>
    <lineage>
        <taxon>Eukaryota</taxon>
        <taxon>Viridiplantae</taxon>
        <taxon>Streptophyta</taxon>
        <taxon>Embryophyta</taxon>
        <taxon>Tracheophyta</taxon>
        <taxon>Spermatophyta</taxon>
        <taxon>Magnoliopsida</taxon>
        <taxon>eudicotyledons</taxon>
        <taxon>Gunneridae</taxon>
        <taxon>Pentapetalae</taxon>
        <taxon>rosids</taxon>
        <taxon>malvids</taxon>
        <taxon>Brassicales</taxon>
        <taxon>Brassicaceae</taxon>
        <taxon>Camelineae</taxon>
        <taxon>Arabidopsis</taxon>
    </lineage>
</organism>
<name>LCMT1_ARATH</name>
<protein>
    <recommendedName>
        <fullName evidence="5">Leucine carboxyl methyltransferase 1 homolog</fullName>
        <ecNumber evidence="2">2.1.1.233</ecNumber>
    </recommendedName>
    <alternativeName>
        <fullName evidence="4">Protein SUPPRESSOR OF BRI1</fullName>
    </alternativeName>
    <alternativeName>
        <fullName evidence="5">[Phosphatase 2A protein]-leucine-carboxy methyltransferase 1</fullName>
    </alternativeName>
</protein>
<sequence>MAESRSNRAAVQATNDDASASKLSCVKKGYMKDDYVHLFVKRPVRRSPIINRGYFSRWAAFRKLMSQFLLSGTSSKKQILSLGAGFDTTYFQLLDEGNGPNLYVELDFKEVTSKKAAVIQNSSQLRDKLGANASISIDEGQVLSDHYKLLPVDLRDIPKLRDVISFADMDLSLPTFIIAECVLIYLDPDSSRAIVNWSSKTFSTAVFFLYEQIHPDDAFGHQMIRNLESRGCALLSIDASPTLLAKERLFLDNGWQRAVAWDMLKVYGSFVDTQEKRRIERLELFDEFEEWHMMQEHYCVTYAVNDAMGIFGDFGFTREGGGERMSSSASSP</sequence>
<accession>Q8VY08</accession>
<accession>O81910</accession>
<accession>Q570N7</accession>
<feature type="chain" id="PRO_0000443354" description="Leucine carboxyl methyltransferase 1 homolog">
    <location>
        <begin position="1"/>
        <end position="332"/>
    </location>
</feature>
<feature type="binding site" evidence="1">
    <location>
        <position position="22"/>
    </location>
    <ligand>
        <name>S-adenosyl-L-methionine</name>
        <dbReference type="ChEBI" id="CHEBI:59789"/>
    </ligand>
</feature>
<feature type="binding site" evidence="1">
    <location>
        <position position="57"/>
    </location>
    <ligand>
        <name>S-adenosyl-L-methionine</name>
        <dbReference type="ChEBI" id="CHEBI:59789"/>
    </ligand>
</feature>
<feature type="binding site" evidence="1">
    <location>
        <position position="83"/>
    </location>
    <ligand>
        <name>S-adenosyl-L-methionine</name>
        <dbReference type="ChEBI" id="CHEBI:59789"/>
    </ligand>
</feature>
<feature type="binding site" evidence="1">
    <location>
        <position position="107"/>
    </location>
    <ligand>
        <name>S-adenosyl-L-methionine</name>
        <dbReference type="ChEBI" id="CHEBI:59789"/>
    </ligand>
</feature>
<feature type="binding site" evidence="1">
    <location>
        <begin position="153"/>
        <end position="154"/>
    </location>
    <ligand>
        <name>S-adenosyl-L-methionine</name>
        <dbReference type="ChEBI" id="CHEBI:59789"/>
    </ligand>
</feature>
<feature type="binding site" evidence="1">
    <location>
        <position position="180"/>
    </location>
    <ligand>
        <name>S-adenosyl-L-methionine</name>
        <dbReference type="ChEBI" id="CHEBI:59789"/>
    </ligand>
</feature>
<feature type="mutagenesis site" description="In sbi1; early flowering." evidence="2">
    <original>E</original>
    <variation>K</variation>
    <location>
        <position position="290"/>
    </location>
</feature>
<evidence type="ECO:0000250" key="1">
    <source>
        <dbReference type="UniProtKB" id="Q9UIC8"/>
    </source>
</evidence>
<evidence type="ECO:0000269" key="2">
    <source>
    </source>
</evidence>
<evidence type="ECO:0000269" key="3">
    <source>
    </source>
</evidence>
<evidence type="ECO:0000303" key="4">
    <source>
    </source>
</evidence>
<evidence type="ECO:0000305" key="5"/>
<evidence type="ECO:0000305" key="6">
    <source>
    </source>
</evidence>
<evidence type="ECO:0000312" key="7">
    <source>
        <dbReference type="Araport" id="AT1G02100"/>
    </source>
</evidence>
<evidence type="ECO:0000312" key="8">
    <source>
        <dbReference type="EMBL" id="AAC24381.1"/>
    </source>
</evidence>
<gene>
    <name evidence="5" type="primary">LCMT1</name>
    <name evidence="4" type="synonym">SBI1</name>
    <name evidence="7" type="ordered locus">At1g02100</name>
    <name evidence="8" type="ORF">T7I23.16</name>
</gene>
<reference key="1">
    <citation type="journal article" date="2000" name="Nature">
        <title>Sequence and analysis of chromosome 1 of the plant Arabidopsis thaliana.</title>
        <authorList>
            <person name="Theologis A."/>
            <person name="Ecker J.R."/>
            <person name="Palm C.J."/>
            <person name="Federspiel N.A."/>
            <person name="Kaul S."/>
            <person name="White O."/>
            <person name="Alonso J."/>
            <person name="Altafi H."/>
            <person name="Araujo R."/>
            <person name="Bowman C.L."/>
            <person name="Brooks S.Y."/>
            <person name="Buehler E."/>
            <person name="Chan A."/>
            <person name="Chao Q."/>
            <person name="Chen H."/>
            <person name="Cheuk R.F."/>
            <person name="Chin C.W."/>
            <person name="Chung M.K."/>
            <person name="Conn L."/>
            <person name="Conway A.B."/>
            <person name="Conway A.R."/>
            <person name="Creasy T.H."/>
            <person name="Dewar K."/>
            <person name="Dunn P."/>
            <person name="Etgu P."/>
            <person name="Feldblyum T.V."/>
            <person name="Feng J.-D."/>
            <person name="Fong B."/>
            <person name="Fujii C.Y."/>
            <person name="Gill J.E."/>
            <person name="Goldsmith A.D."/>
            <person name="Haas B."/>
            <person name="Hansen N.F."/>
            <person name="Hughes B."/>
            <person name="Huizar L."/>
            <person name="Hunter J.L."/>
            <person name="Jenkins J."/>
            <person name="Johnson-Hopson C."/>
            <person name="Khan S."/>
            <person name="Khaykin E."/>
            <person name="Kim C.J."/>
            <person name="Koo H.L."/>
            <person name="Kremenetskaia I."/>
            <person name="Kurtz D.B."/>
            <person name="Kwan A."/>
            <person name="Lam B."/>
            <person name="Langin-Hooper S."/>
            <person name="Lee A."/>
            <person name="Lee J.M."/>
            <person name="Lenz C.A."/>
            <person name="Li J.H."/>
            <person name="Li Y.-P."/>
            <person name="Lin X."/>
            <person name="Liu S.X."/>
            <person name="Liu Z.A."/>
            <person name="Luros J.S."/>
            <person name="Maiti R."/>
            <person name="Marziali A."/>
            <person name="Militscher J."/>
            <person name="Miranda M."/>
            <person name="Nguyen M."/>
            <person name="Nierman W.C."/>
            <person name="Osborne B.I."/>
            <person name="Pai G."/>
            <person name="Peterson J."/>
            <person name="Pham P.K."/>
            <person name="Rizzo M."/>
            <person name="Rooney T."/>
            <person name="Rowley D."/>
            <person name="Sakano H."/>
            <person name="Salzberg S.L."/>
            <person name="Schwartz J.R."/>
            <person name="Shinn P."/>
            <person name="Southwick A.M."/>
            <person name="Sun H."/>
            <person name="Tallon L.J."/>
            <person name="Tambunga G."/>
            <person name="Toriumi M.J."/>
            <person name="Town C.D."/>
            <person name="Utterback T."/>
            <person name="Van Aken S."/>
            <person name="Vaysberg M."/>
            <person name="Vysotskaia V.S."/>
            <person name="Walker M."/>
            <person name="Wu D."/>
            <person name="Yu G."/>
            <person name="Fraser C.M."/>
            <person name="Venter J.C."/>
            <person name="Davis R.W."/>
        </authorList>
    </citation>
    <scope>NUCLEOTIDE SEQUENCE [LARGE SCALE GENOMIC DNA]</scope>
    <source>
        <strain>cv. Columbia</strain>
    </source>
</reference>
<reference key="2">
    <citation type="journal article" date="2017" name="Plant J.">
        <title>Araport11: a complete reannotation of the Arabidopsis thaliana reference genome.</title>
        <authorList>
            <person name="Cheng C.Y."/>
            <person name="Krishnakumar V."/>
            <person name="Chan A.P."/>
            <person name="Thibaud-Nissen F."/>
            <person name="Schobel S."/>
            <person name="Town C.D."/>
        </authorList>
    </citation>
    <scope>GENOME REANNOTATION</scope>
    <source>
        <strain>cv. Columbia</strain>
    </source>
</reference>
<reference key="3">
    <citation type="journal article" date="2003" name="Science">
        <title>Empirical analysis of transcriptional activity in the Arabidopsis genome.</title>
        <authorList>
            <person name="Yamada K."/>
            <person name="Lim J."/>
            <person name="Dale J.M."/>
            <person name="Chen H."/>
            <person name="Shinn P."/>
            <person name="Palm C.J."/>
            <person name="Southwick A.M."/>
            <person name="Wu H.C."/>
            <person name="Kim C.J."/>
            <person name="Nguyen M."/>
            <person name="Pham P.K."/>
            <person name="Cheuk R.F."/>
            <person name="Karlin-Newmann G."/>
            <person name="Liu S.X."/>
            <person name="Lam B."/>
            <person name="Sakano H."/>
            <person name="Wu T."/>
            <person name="Yu G."/>
            <person name="Miranda M."/>
            <person name="Quach H.L."/>
            <person name="Tripp M."/>
            <person name="Chang C.H."/>
            <person name="Lee J.M."/>
            <person name="Toriumi M.J."/>
            <person name="Chan M.M."/>
            <person name="Tang C.C."/>
            <person name="Onodera C.S."/>
            <person name="Deng J.M."/>
            <person name="Akiyama K."/>
            <person name="Ansari Y."/>
            <person name="Arakawa T."/>
            <person name="Banh J."/>
            <person name="Banno F."/>
            <person name="Bowser L."/>
            <person name="Brooks S.Y."/>
            <person name="Carninci P."/>
            <person name="Chao Q."/>
            <person name="Choy N."/>
            <person name="Enju A."/>
            <person name="Goldsmith A.D."/>
            <person name="Gurjal M."/>
            <person name="Hansen N.F."/>
            <person name="Hayashizaki Y."/>
            <person name="Johnson-Hopson C."/>
            <person name="Hsuan V.W."/>
            <person name="Iida K."/>
            <person name="Karnes M."/>
            <person name="Khan S."/>
            <person name="Koesema E."/>
            <person name="Ishida J."/>
            <person name="Jiang P.X."/>
            <person name="Jones T."/>
            <person name="Kawai J."/>
            <person name="Kamiya A."/>
            <person name="Meyers C."/>
            <person name="Nakajima M."/>
            <person name="Narusaka M."/>
            <person name="Seki M."/>
            <person name="Sakurai T."/>
            <person name="Satou M."/>
            <person name="Tamse R."/>
            <person name="Vaysberg M."/>
            <person name="Wallender E.K."/>
            <person name="Wong C."/>
            <person name="Yamamura Y."/>
            <person name="Yuan S."/>
            <person name="Shinozaki K."/>
            <person name="Davis R.W."/>
            <person name="Theologis A."/>
            <person name="Ecker J.R."/>
        </authorList>
    </citation>
    <scope>NUCLEOTIDE SEQUENCE [LARGE SCALE MRNA]</scope>
    <source>
        <strain>cv. Columbia</strain>
    </source>
</reference>
<reference key="4">
    <citation type="submission" date="2005-03" db="EMBL/GenBank/DDBJ databases">
        <title>Large-scale analysis of RIKEN Arabidopsis full-length (RAFL) cDNAs.</title>
        <authorList>
            <person name="Totoki Y."/>
            <person name="Seki M."/>
            <person name="Ishida J."/>
            <person name="Nakajima M."/>
            <person name="Enju A."/>
            <person name="Kamiya A."/>
            <person name="Narusaka M."/>
            <person name="Shin-i T."/>
            <person name="Nakagawa M."/>
            <person name="Sakamoto N."/>
            <person name="Oishi K."/>
            <person name="Kohara Y."/>
            <person name="Kobayashi M."/>
            <person name="Toyoda A."/>
            <person name="Sakaki Y."/>
            <person name="Sakurai T."/>
            <person name="Iida K."/>
            <person name="Akiyama K."/>
            <person name="Satou M."/>
            <person name="Toyoda T."/>
            <person name="Konagaya A."/>
            <person name="Carninci P."/>
            <person name="Kawai J."/>
            <person name="Hayashizaki Y."/>
            <person name="Shinozaki K."/>
        </authorList>
    </citation>
    <scope>NUCLEOTIDE SEQUENCE [LARGE SCALE MRNA] OF 249-332</scope>
    <source>
        <strain>cv. Columbia</strain>
    </source>
</reference>
<reference key="5">
    <citation type="journal article" date="2011" name="Sci. Signal.">
        <title>Methylation of a phosphatase specifies dephosphorylation and degradation of activated brassinosteroid receptors.</title>
        <authorList>
            <person name="Wu G."/>
            <person name="Wang X."/>
            <person name="Li X."/>
            <person name="Kamiya Y."/>
            <person name="Otegui M.S."/>
            <person name="Chory J."/>
        </authorList>
    </citation>
    <scope>FUNCTION</scope>
    <scope>CATALYTIC ACTIVITY</scope>
    <scope>SUBCELLULAR LOCATION</scope>
    <scope>INDUCTION BY BRASSINOSTEROID</scope>
    <scope>MUTAGENESIS OF GLU-290</scope>
</reference>
<reference key="6">
    <citation type="journal article" date="2017" name="Plant Cell Environ.">
        <title>Methylation of protein phosphatase 2A-influence of regulators and environmental stress factors.</title>
        <authorList>
            <person name="Creighton M.T."/>
            <person name="Kolton A."/>
            <person name="Kataya A.R.A."/>
            <person name="Maple-Groedem J."/>
            <person name="Averkina I.O."/>
            <person name="Heidari B."/>
            <person name="Lillo C."/>
        </authorList>
    </citation>
    <scope>FUNCTION</scope>
    <scope>DISRUPTION PHENOTYPE</scope>
</reference>
<proteinExistence type="evidence at protein level"/>
<comment type="function">
    <text evidence="2 3 6">Methylates the carboxyl group of the C-terminal leucine residue of protein phosphatase 2A (PP2A) catalytic subunits to form alpha-leucine ester residues (Probable) (PubMed:21558554). Involved in brassinosteroid (BR) signaling. Plays a negative role in BR signaling pathway. Functions as a positive regulator of BRI1 receptor-kinase degradation. Methylates PP2A, thus facilitating its association with activated BRI1. This leads to receptor dephosphorylation and degradation, and thus to the termination of BR signaling. May act upstream of ASK7/BIN2 (PubMed:21558554). Involved in methylation of PP2A during environmental stress responses (PubMed:28741704).</text>
</comment>
<comment type="catalytic activity">
    <reaction evidence="2">
        <text>[phosphatase 2A protein]-C-terminal L-leucine + S-adenosyl-L-methionine = [phosphatase 2A protein]-C-terminal L-leucine methyl ester + S-adenosyl-L-homocysteine</text>
        <dbReference type="Rhea" id="RHEA:48544"/>
        <dbReference type="Rhea" id="RHEA-COMP:12134"/>
        <dbReference type="Rhea" id="RHEA-COMP:12135"/>
        <dbReference type="ChEBI" id="CHEBI:57856"/>
        <dbReference type="ChEBI" id="CHEBI:59789"/>
        <dbReference type="ChEBI" id="CHEBI:90516"/>
        <dbReference type="ChEBI" id="CHEBI:90517"/>
        <dbReference type="EC" id="2.1.1.233"/>
    </reaction>
</comment>
<comment type="subcellular location">
    <subcellularLocation>
        <location evidence="2">Cytoplasm</location>
    </subcellularLocation>
    <subcellularLocation>
        <location evidence="2">Membrane</location>
        <topology>Peripheral membrane protein</topology>
    </subcellularLocation>
</comment>
<comment type="induction">
    <text evidence="2">Induced by brassinosteroids.</text>
</comment>
<comment type="disruption phenotype">
    <text evidence="3">Reduced rosette size and early flowering. Reduced length of the main root and reduced number of lateral roots.</text>
</comment>
<comment type="similarity">
    <text evidence="5">Belongs to the methyltransferase superfamily. LCMT family.</text>
</comment>
<comment type="sequence caution" evidence="5">
    <conflict type="erroneous gene model prediction">
        <sequence resource="EMBL-CDS" id="AAC24381"/>
    </conflict>
</comment>
<comment type="sequence caution" evidence="5">
    <conflict type="erroneous initiation">
        <sequence resource="EMBL-CDS" id="BAD95220"/>
    </conflict>
    <text>Truncated N-terminus.</text>
</comment>
<keyword id="KW-0963">Cytoplasm</keyword>
<keyword id="KW-0472">Membrane</keyword>
<keyword id="KW-0489">Methyltransferase</keyword>
<keyword id="KW-1185">Reference proteome</keyword>
<keyword id="KW-0949">S-adenosyl-L-methionine</keyword>
<keyword id="KW-0346">Stress response</keyword>
<keyword id="KW-0808">Transferase</keyword>